<reference evidence="6" key="1">
    <citation type="journal article" date="2006" name="Toxicon">
        <title>Primary structure of a thrombin-like serine protease, kangshuanmei, from the venom of Agkistrodon halys brevicaudus stejneger.</title>
        <authorList>
            <person name="Sakai J."/>
            <person name="Zhang S."/>
            <person name="Chen H."/>
            <person name="Atsumi F."/>
            <person name="Matsui T."/>
            <person name="Shiono H."/>
            <person name="Sanada S."/>
            <person name="Okada T."/>
        </authorList>
    </citation>
    <scope>PROTEIN SEQUENCE</scope>
    <scope>FUNCTION</scope>
    <scope>SUBCELLULAR LOCATION</scope>
    <scope>TISSUE SPECIFICITY</scope>
    <scope>MASS SPECTROMETRY</scope>
    <scope>GLYCOSYLATION AT ASN-81; ASN-99; ASN-148 AND ASN-229</scope>
    <source>
        <tissue evidence="5">Venom</tissue>
    </source>
</reference>
<reference evidence="6" key="2">
    <citation type="journal article" date="2001" name="J. Nat. Toxins">
        <title>Characterization of a thrombin-like serine protease, Kangshuanmei, isolated from the venom of a Chinese snake, Agkistrodon halys brevicaudus stejneger.</title>
        <authorList>
            <person name="Zhang S."/>
            <person name="Ma B."/>
            <person name="Sakai J."/>
            <person name="Shiono H."/>
            <person name="Matsui T."/>
            <person name="Sugie I."/>
            <person name="Okada T."/>
        </authorList>
    </citation>
    <scope>PROTEIN SEQUENCE OF 1-50</scope>
    <scope>FUNCTION</scope>
    <scope>ACTIVITY REGULATION</scope>
    <scope>SUBUNIT</scope>
    <scope>SUBCELLULAR LOCATION</scope>
    <scope>TISSUE SPECIFICITY</scope>
    <source>
        <tissue evidence="4">Venom</tissue>
    </source>
</reference>
<comment type="function">
    <text evidence="4 5">Thrombin-like snake venom serine protease. Cleaves bonds after Arg and Lys, converts fibrinogen (FGA and FGB) to fibrin and releases both fibrinopeptides A and B, and fibrinogen peptide Bbeta1-42. Has a blood clotting activity.</text>
</comment>
<comment type="activity regulation">
    <text evidence="4">Inhibited by 4-(2-aminoethyl)-benzensulfonyl fluoride. Not inhibited by antithrombin-III.</text>
</comment>
<comment type="subunit">
    <text evidence="4">Monomer.</text>
</comment>
<comment type="subcellular location">
    <subcellularLocation>
        <location evidence="4 5">Secreted</location>
    </subcellularLocation>
</comment>
<comment type="tissue specificity">
    <text evidence="4 5">Expressed by the venom gland.</text>
</comment>
<comment type="PTM">
    <text evidence="5">N-glycosylated by units composed of Fuc, Man, GlcNAc, Gal and NeuAC residues.</text>
</comment>
<comment type="mass spectrometry">
    <text>For the deglycosylated protein.</text>
</comment>
<comment type="mass spectrometry">
    <text>For the glycosylated protein.</text>
</comment>
<comment type="similarity">
    <text evidence="3">Belongs to the peptidase S1 family. Snake venom subfamily.</text>
</comment>
<feature type="chain" id="PRO_0000283728" description="Thrombin-like enzyme kangshuanmei">
    <location>
        <begin position="1"/>
        <end position="236"/>
    </location>
</feature>
<feature type="domain" description="Peptidase S1" evidence="3">
    <location>
        <begin position="1"/>
        <end position="227"/>
    </location>
</feature>
<feature type="active site" description="Charge relay system" evidence="1">
    <location>
        <position position="43"/>
    </location>
</feature>
<feature type="active site" description="Charge relay system" evidence="1">
    <location>
        <position position="88"/>
    </location>
</feature>
<feature type="active site" description="Charge relay system" evidence="1">
    <location>
        <position position="182"/>
    </location>
</feature>
<feature type="glycosylation site" description="N-linked (GlcNAc...) asparagine" evidence="5">
    <location>
        <position position="81"/>
    </location>
</feature>
<feature type="glycosylation site" description="N-linked (GlcNAc...) asparagine" evidence="5">
    <location>
        <position position="99"/>
    </location>
</feature>
<feature type="glycosylation site" description="N-linked (GlcNAc...) asparagine" evidence="5">
    <location>
        <position position="148"/>
    </location>
</feature>
<feature type="glycosylation site" description="N-linked (GlcNAc...) asparagine" evidence="5">
    <location>
        <position position="229"/>
    </location>
</feature>
<feature type="disulfide bond" evidence="2 3">
    <location>
        <begin position="7"/>
        <end position="141"/>
    </location>
</feature>
<feature type="disulfide bond" evidence="2 3">
    <location>
        <begin position="28"/>
        <end position="44"/>
    </location>
</feature>
<feature type="disulfide bond" evidence="2 3">
    <location>
        <begin position="78"/>
        <end position="234"/>
    </location>
</feature>
<feature type="disulfide bond" evidence="2 3">
    <location>
        <begin position="120"/>
        <end position="188"/>
    </location>
</feature>
<feature type="disulfide bond" evidence="2 3">
    <location>
        <begin position="152"/>
        <end position="167"/>
    </location>
</feature>
<feature type="disulfide bond" evidence="2 3">
    <location>
        <begin position="178"/>
        <end position="203"/>
    </location>
</feature>
<protein>
    <recommendedName>
        <fullName>Thrombin-like enzyme kangshuanmei</fullName>
        <shortName>SVTLE</shortName>
        <ecNumber>3.4.21.-</ecNumber>
    </recommendedName>
    <alternativeName>
        <fullName>Fibrinogen-clotting enzyme</fullName>
    </alternativeName>
    <alternativeName>
        <fullName>Snake venom serine protease</fullName>
        <shortName>SVSP</shortName>
    </alternativeName>
</protein>
<sequence>VIGGDECNINEHRFLVALYHSRSRTFLCGGTLINQEWVLTAAHCDRFFMYIRLGMHNKNVNFDDEQRRSPKEKYFFRCSNNFTKWDKDIMLIRLDSPVNNSAHIAPLSLPSNPPSVGSVCRVMGWGQTTSPQEDLSDVPRCANINLFNFTVCRAAYPWLPATSRVLCAGDMEGGIDTCNRDSGGPLICNGQFQGIVSKGQNLCAQPRKPALYTKVFDHLDWIQSIIAGNKTVTCPP</sequence>
<keyword id="KW-1204">Blood coagulation cascade activating toxin</keyword>
<keyword id="KW-0903">Direct protein sequencing</keyword>
<keyword id="KW-1015">Disulfide bond</keyword>
<keyword id="KW-0325">Glycoprotein</keyword>
<keyword id="KW-1199">Hemostasis impairing toxin</keyword>
<keyword id="KW-0378">Hydrolase</keyword>
<keyword id="KW-0645">Protease</keyword>
<keyword id="KW-0964">Secreted</keyword>
<keyword id="KW-0720">Serine protease</keyword>
<keyword id="KW-0800">Toxin</keyword>
<organism>
    <name type="scientific">Gloydius brevicauda</name>
    <name type="common">Korean slamosa snake</name>
    <name type="synonym">Agkistrodon halys brevicaudus</name>
    <dbReference type="NCBI Taxonomy" id="3148161"/>
    <lineage>
        <taxon>Eukaryota</taxon>
        <taxon>Metazoa</taxon>
        <taxon>Chordata</taxon>
        <taxon>Craniata</taxon>
        <taxon>Vertebrata</taxon>
        <taxon>Euteleostomi</taxon>
        <taxon>Lepidosauria</taxon>
        <taxon>Squamata</taxon>
        <taxon>Bifurcata</taxon>
        <taxon>Unidentata</taxon>
        <taxon>Episquamata</taxon>
        <taxon>Toxicofera</taxon>
        <taxon>Serpentes</taxon>
        <taxon>Colubroidea</taxon>
        <taxon>Viperidae</taxon>
        <taxon>Crotalinae</taxon>
        <taxon>Gloydius</taxon>
    </lineage>
</organism>
<dbReference type="EC" id="3.4.21.-"/>
<dbReference type="SMR" id="P85109"/>
<dbReference type="MEROPS" id="S01.524"/>
<dbReference type="iPTMnet" id="P85109"/>
<dbReference type="GO" id="GO:0005576">
    <property type="term" value="C:extracellular region"/>
    <property type="evidence" value="ECO:0000314"/>
    <property type="project" value="UniProtKB"/>
</dbReference>
<dbReference type="GO" id="GO:0030141">
    <property type="term" value="C:secretory granule"/>
    <property type="evidence" value="ECO:0007669"/>
    <property type="project" value="TreeGrafter"/>
</dbReference>
<dbReference type="GO" id="GO:0004252">
    <property type="term" value="F:serine-type endopeptidase activity"/>
    <property type="evidence" value="ECO:0000314"/>
    <property type="project" value="UniProtKB"/>
</dbReference>
<dbReference type="GO" id="GO:0090729">
    <property type="term" value="F:toxin activity"/>
    <property type="evidence" value="ECO:0007669"/>
    <property type="project" value="UniProtKB-KW"/>
</dbReference>
<dbReference type="GO" id="GO:0030194">
    <property type="term" value="P:positive regulation of blood coagulation"/>
    <property type="evidence" value="ECO:0000314"/>
    <property type="project" value="UniProtKB"/>
</dbReference>
<dbReference type="GO" id="GO:0006508">
    <property type="term" value="P:proteolysis"/>
    <property type="evidence" value="ECO:0007669"/>
    <property type="project" value="UniProtKB-KW"/>
</dbReference>
<dbReference type="CDD" id="cd00190">
    <property type="entry name" value="Tryp_SPc"/>
    <property type="match status" value="1"/>
</dbReference>
<dbReference type="FunFam" id="2.40.10.10:FF:000158">
    <property type="entry name" value="Thrombin-like enzyme saxthrombin"/>
    <property type="match status" value="1"/>
</dbReference>
<dbReference type="FunFam" id="2.40.10.10:FF:000153">
    <property type="entry name" value="Venom plasminogen activator TSV-PA"/>
    <property type="match status" value="1"/>
</dbReference>
<dbReference type="Gene3D" id="2.40.10.10">
    <property type="entry name" value="Trypsin-like serine proteases"/>
    <property type="match status" value="2"/>
</dbReference>
<dbReference type="InterPro" id="IPR009003">
    <property type="entry name" value="Peptidase_S1_PA"/>
</dbReference>
<dbReference type="InterPro" id="IPR043504">
    <property type="entry name" value="Peptidase_S1_PA_chymotrypsin"/>
</dbReference>
<dbReference type="InterPro" id="IPR001314">
    <property type="entry name" value="Peptidase_S1A"/>
</dbReference>
<dbReference type="InterPro" id="IPR001254">
    <property type="entry name" value="Trypsin_dom"/>
</dbReference>
<dbReference type="InterPro" id="IPR018114">
    <property type="entry name" value="TRYPSIN_HIS"/>
</dbReference>
<dbReference type="PANTHER" id="PTHR24271:SF47">
    <property type="entry name" value="KALLIKREIN-1"/>
    <property type="match status" value="1"/>
</dbReference>
<dbReference type="PANTHER" id="PTHR24271">
    <property type="entry name" value="KALLIKREIN-RELATED"/>
    <property type="match status" value="1"/>
</dbReference>
<dbReference type="Pfam" id="PF00089">
    <property type="entry name" value="Trypsin"/>
    <property type="match status" value="1"/>
</dbReference>
<dbReference type="PRINTS" id="PR00722">
    <property type="entry name" value="CHYMOTRYPSIN"/>
</dbReference>
<dbReference type="SMART" id="SM00020">
    <property type="entry name" value="Tryp_SPc"/>
    <property type="match status" value="1"/>
</dbReference>
<dbReference type="SUPFAM" id="SSF50494">
    <property type="entry name" value="Trypsin-like serine proteases"/>
    <property type="match status" value="1"/>
</dbReference>
<dbReference type="PROSITE" id="PS50240">
    <property type="entry name" value="TRYPSIN_DOM"/>
    <property type="match status" value="1"/>
</dbReference>
<dbReference type="PROSITE" id="PS00134">
    <property type="entry name" value="TRYPSIN_HIS"/>
    <property type="match status" value="1"/>
</dbReference>
<name>VSP1_GLOBR</name>
<evidence type="ECO:0000250" key="1">
    <source>
        <dbReference type="UniProtKB" id="P33589"/>
    </source>
</evidence>
<evidence type="ECO:0000250" key="2">
    <source>
        <dbReference type="UniProtKB" id="Q9PSN3"/>
    </source>
</evidence>
<evidence type="ECO:0000255" key="3">
    <source>
        <dbReference type="PROSITE-ProRule" id="PRU00274"/>
    </source>
</evidence>
<evidence type="ECO:0000269" key="4">
    <source>
    </source>
</evidence>
<evidence type="ECO:0000269" key="5">
    <source>
    </source>
</evidence>
<evidence type="ECO:0000305" key="6"/>
<proteinExistence type="evidence at protein level"/>
<accession>P85109</accession>